<keyword id="KW-1003">Cell membrane</keyword>
<keyword id="KW-0325">Glycoprotein</keyword>
<keyword id="KW-0336">GPI-anchor</keyword>
<keyword id="KW-0449">Lipoprotein</keyword>
<keyword id="KW-0472">Membrane</keyword>
<keyword id="KW-0654">Proteoglycan</keyword>
<keyword id="KW-1185">Reference proteome</keyword>
<keyword id="KW-0732">Signal</keyword>
<gene>
    <name type="primary">FLA11</name>
    <name type="ordered locus">At5g03170</name>
    <name type="ORF">F15A17_200</name>
    <name type="ORF">MOK16.8</name>
</gene>
<organism>
    <name type="scientific">Arabidopsis thaliana</name>
    <name type="common">Mouse-ear cress</name>
    <dbReference type="NCBI Taxonomy" id="3702"/>
    <lineage>
        <taxon>Eukaryota</taxon>
        <taxon>Viridiplantae</taxon>
        <taxon>Streptophyta</taxon>
        <taxon>Embryophyta</taxon>
        <taxon>Tracheophyta</taxon>
        <taxon>Spermatophyta</taxon>
        <taxon>Magnoliopsida</taxon>
        <taxon>eudicotyledons</taxon>
        <taxon>Gunneridae</taxon>
        <taxon>Pentapetalae</taxon>
        <taxon>rosids</taxon>
        <taxon>malvids</taxon>
        <taxon>Brassicales</taxon>
        <taxon>Brassicaceae</taxon>
        <taxon>Camelineae</taxon>
        <taxon>Arabidopsis</taxon>
    </lineage>
</organism>
<evidence type="ECO:0000255" key="1"/>
<evidence type="ECO:0000255" key="2">
    <source>
        <dbReference type="PROSITE-ProRule" id="PRU00082"/>
    </source>
</evidence>
<evidence type="ECO:0000256" key="3">
    <source>
        <dbReference type="SAM" id="MobiDB-lite"/>
    </source>
</evidence>
<evidence type="ECO:0000269" key="4">
    <source>
    </source>
</evidence>
<evidence type="ECO:0000305" key="5"/>
<sequence>MATSRTFIFSNLFIFFLVIATTYGQAPAPGPSGPTNITAILEKAGQFTLFIRLLKSTQASDQINTQLNSSSSNGLTVFAPTDNAFNSLKSGTLNSLSDQQKVQLVQFHVLPTLITMPQFQTVSNPLRTQAGDGQNGKFPLNITSSGNQVNITTGVVSATVANSVYSDKQLAVYQVDQVLLPLAMFGSSVAPAPAPEKGGSVSKGSASGGDDGGDSTDSSDAERTGFGFGIRITTVAAIAASSSLWI</sequence>
<dbReference type="EMBL" id="AB005240">
    <property type="protein sequence ID" value="BAB08377.1"/>
    <property type="molecule type" value="Genomic_DNA"/>
</dbReference>
<dbReference type="EMBL" id="AL163002">
    <property type="protein sequence ID" value="CAB86084.1"/>
    <property type="molecule type" value="Genomic_DNA"/>
</dbReference>
<dbReference type="EMBL" id="CP002688">
    <property type="protein sequence ID" value="AED90563.1"/>
    <property type="molecule type" value="Genomic_DNA"/>
</dbReference>
<dbReference type="EMBL" id="AF360183">
    <property type="protein sequence ID" value="AAK25893.1"/>
    <property type="molecule type" value="mRNA"/>
</dbReference>
<dbReference type="EMBL" id="AY039999">
    <property type="protein sequence ID" value="AAK64076.1"/>
    <property type="molecule type" value="mRNA"/>
</dbReference>
<dbReference type="EMBL" id="AY085388">
    <property type="protein sequence ID" value="AAM62616.1"/>
    <property type="molecule type" value="mRNA"/>
</dbReference>
<dbReference type="PIR" id="T48338">
    <property type="entry name" value="T48338"/>
</dbReference>
<dbReference type="RefSeq" id="NP_195937.1">
    <property type="nucleotide sequence ID" value="NM_120395.2"/>
</dbReference>
<dbReference type="SMR" id="Q8LEJ6"/>
<dbReference type="FunCoup" id="Q8LEJ6">
    <property type="interactions" value="29"/>
</dbReference>
<dbReference type="STRING" id="3702.Q8LEJ6"/>
<dbReference type="GlyCosmos" id="Q8LEJ6">
    <property type="glycosylation" value="4 sites, No reported glycans"/>
</dbReference>
<dbReference type="GlyGen" id="Q8LEJ6">
    <property type="glycosylation" value="4 sites"/>
</dbReference>
<dbReference type="PaxDb" id="3702-AT5G03170.1"/>
<dbReference type="ProteomicsDB" id="230428"/>
<dbReference type="EnsemblPlants" id="AT5G03170.1">
    <property type="protein sequence ID" value="AT5G03170.1"/>
    <property type="gene ID" value="AT5G03170"/>
</dbReference>
<dbReference type="GeneID" id="831914"/>
<dbReference type="Gramene" id="AT5G03170.1">
    <property type="protein sequence ID" value="AT5G03170.1"/>
    <property type="gene ID" value="AT5G03170"/>
</dbReference>
<dbReference type="KEGG" id="ath:AT5G03170"/>
<dbReference type="Araport" id="AT5G03170"/>
<dbReference type="TAIR" id="AT5G03170">
    <property type="gene designation" value="FLA11"/>
</dbReference>
<dbReference type="eggNOG" id="ENOG502QQ1S">
    <property type="taxonomic scope" value="Eukaryota"/>
</dbReference>
<dbReference type="HOGENOM" id="CLU_067693_1_0_1"/>
<dbReference type="InParanoid" id="Q8LEJ6"/>
<dbReference type="OMA" id="IANSPWD"/>
<dbReference type="OrthoDB" id="286301at2759"/>
<dbReference type="PhylomeDB" id="Q8LEJ6"/>
<dbReference type="PRO" id="PR:Q8LEJ6"/>
<dbReference type="Proteomes" id="UP000006548">
    <property type="component" value="Chromosome 5"/>
</dbReference>
<dbReference type="ExpressionAtlas" id="Q8LEJ6">
    <property type="expression patterns" value="baseline and differential"/>
</dbReference>
<dbReference type="GO" id="GO:0005886">
    <property type="term" value="C:plasma membrane"/>
    <property type="evidence" value="ECO:0000314"/>
    <property type="project" value="TAIR"/>
</dbReference>
<dbReference type="GO" id="GO:0098552">
    <property type="term" value="C:side of membrane"/>
    <property type="evidence" value="ECO:0007669"/>
    <property type="project" value="UniProtKB-KW"/>
</dbReference>
<dbReference type="GO" id="GO:0009834">
    <property type="term" value="P:plant-type secondary cell wall biogenesis"/>
    <property type="evidence" value="ECO:0000315"/>
    <property type="project" value="TAIR"/>
</dbReference>
<dbReference type="FunFam" id="2.30.180.10:FF:000006">
    <property type="entry name" value="Fasciclin-like arabinogalactan protein 11"/>
    <property type="match status" value="1"/>
</dbReference>
<dbReference type="Gene3D" id="2.30.180.10">
    <property type="entry name" value="FAS1 domain"/>
    <property type="match status" value="1"/>
</dbReference>
<dbReference type="InterPro" id="IPR036378">
    <property type="entry name" value="FAS1_dom_sf"/>
</dbReference>
<dbReference type="InterPro" id="IPR000782">
    <property type="entry name" value="FAS1_domain"/>
</dbReference>
<dbReference type="InterPro" id="IPR045003">
    <property type="entry name" value="FLA_A"/>
</dbReference>
<dbReference type="PANTHER" id="PTHR32077">
    <property type="entry name" value="FASCICLIN-LIKE ARABINOGALACTAN PROTEIN"/>
    <property type="match status" value="1"/>
</dbReference>
<dbReference type="PANTHER" id="PTHR32077:SF65">
    <property type="entry name" value="FASCICLIN-LIKE ARABINOGALACTAN PROTEIN 11"/>
    <property type="match status" value="1"/>
</dbReference>
<dbReference type="Pfam" id="PF02469">
    <property type="entry name" value="Fasciclin"/>
    <property type="match status" value="1"/>
</dbReference>
<dbReference type="SMART" id="SM00554">
    <property type="entry name" value="FAS1"/>
    <property type="match status" value="1"/>
</dbReference>
<dbReference type="SUPFAM" id="SSF82153">
    <property type="entry name" value="FAS1 domain"/>
    <property type="match status" value="1"/>
</dbReference>
<dbReference type="PROSITE" id="PS50213">
    <property type="entry name" value="FAS1"/>
    <property type="match status" value="1"/>
</dbReference>
<proteinExistence type="evidence at transcript level"/>
<name>FLA11_ARATH</name>
<protein>
    <recommendedName>
        <fullName>Fasciclin-like arabinogalactan protein 11</fullName>
    </recommendedName>
</protein>
<accession>Q8LEJ6</accession>
<accession>Q9LYW8</accession>
<feature type="signal peptide" evidence="1">
    <location>
        <begin position="1"/>
        <end position="24"/>
    </location>
</feature>
<feature type="chain" id="PRO_0000253869" description="Fasciclin-like arabinogalactan protein 11">
    <location>
        <begin position="25"/>
        <end position="219"/>
    </location>
</feature>
<feature type="propeptide" id="PRO_0000253870" description="Removed in mature form" evidence="1">
    <location>
        <begin position="220"/>
        <end position="246"/>
    </location>
</feature>
<feature type="domain" description="FAS1" evidence="2">
    <location>
        <begin position="34"/>
        <end position="179"/>
    </location>
</feature>
<feature type="region of interest" description="Disordered" evidence="3">
    <location>
        <begin position="193"/>
        <end position="222"/>
    </location>
</feature>
<feature type="lipid moiety-binding region" description="GPI-anchor amidated serine" evidence="1">
    <location>
        <position position="219"/>
    </location>
</feature>
<feature type="glycosylation site" description="N-linked (GlcNAc...) asparagine" evidence="1">
    <location>
        <position position="36"/>
    </location>
</feature>
<feature type="glycosylation site" description="N-linked (GlcNAc...) asparagine" evidence="1">
    <location>
        <position position="68"/>
    </location>
</feature>
<feature type="glycosylation site" description="N-linked (GlcNAc...) asparagine" evidence="1">
    <location>
        <position position="141"/>
    </location>
</feature>
<feature type="glycosylation site" description="N-linked (GlcNAc...) asparagine" evidence="1">
    <location>
        <position position="150"/>
    </location>
</feature>
<feature type="sequence conflict" description="In Ref. 5; AAM62616." evidence="5" ref="5">
    <original>I</original>
    <variation>L</variation>
    <location>
        <position position="19"/>
    </location>
</feature>
<feature type="sequence conflict" description="In Ref. 5; AAM62616." evidence="5" ref="5">
    <original>G</original>
    <variation>A</variation>
    <location>
        <position position="225"/>
    </location>
</feature>
<reference key="1">
    <citation type="journal article" date="1997" name="DNA Res.">
        <title>Structural analysis of Arabidopsis thaliana chromosome 5. I. Sequence features of the 1.6 Mb regions covered by twenty physically assigned P1 clones.</title>
        <authorList>
            <person name="Sato S."/>
            <person name="Kotani H."/>
            <person name="Nakamura Y."/>
            <person name="Kaneko T."/>
            <person name="Asamizu E."/>
            <person name="Fukami M."/>
            <person name="Miyajima N."/>
            <person name="Tabata S."/>
        </authorList>
    </citation>
    <scope>NUCLEOTIDE SEQUENCE [LARGE SCALE GENOMIC DNA]</scope>
    <source>
        <strain>cv. Columbia</strain>
    </source>
</reference>
<reference key="2">
    <citation type="journal article" date="2000" name="Nature">
        <title>Sequence and analysis of chromosome 5 of the plant Arabidopsis thaliana.</title>
        <authorList>
            <person name="Tabata S."/>
            <person name="Kaneko T."/>
            <person name="Nakamura Y."/>
            <person name="Kotani H."/>
            <person name="Kato T."/>
            <person name="Asamizu E."/>
            <person name="Miyajima N."/>
            <person name="Sasamoto S."/>
            <person name="Kimura T."/>
            <person name="Hosouchi T."/>
            <person name="Kawashima K."/>
            <person name="Kohara M."/>
            <person name="Matsumoto M."/>
            <person name="Matsuno A."/>
            <person name="Muraki A."/>
            <person name="Nakayama S."/>
            <person name="Nakazaki N."/>
            <person name="Naruo K."/>
            <person name="Okumura S."/>
            <person name="Shinpo S."/>
            <person name="Takeuchi C."/>
            <person name="Wada T."/>
            <person name="Watanabe A."/>
            <person name="Yamada M."/>
            <person name="Yasuda M."/>
            <person name="Sato S."/>
            <person name="de la Bastide M."/>
            <person name="Huang E."/>
            <person name="Spiegel L."/>
            <person name="Gnoj L."/>
            <person name="O'Shaughnessy A."/>
            <person name="Preston R."/>
            <person name="Habermann K."/>
            <person name="Murray J."/>
            <person name="Johnson D."/>
            <person name="Rohlfing T."/>
            <person name="Nelson J."/>
            <person name="Stoneking T."/>
            <person name="Pepin K."/>
            <person name="Spieth J."/>
            <person name="Sekhon M."/>
            <person name="Armstrong J."/>
            <person name="Becker M."/>
            <person name="Belter E."/>
            <person name="Cordum H."/>
            <person name="Cordes M."/>
            <person name="Courtney L."/>
            <person name="Courtney W."/>
            <person name="Dante M."/>
            <person name="Du H."/>
            <person name="Edwards J."/>
            <person name="Fryman J."/>
            <person name="Haakensen B."/>
            <person name="Lamar E."/>
            <person name="Latreille P."/>
            <person name="Leonard S."/>
            <person name="Meyer R."/>
            <person name="Mulvaney E."/>
            <person name="Ozersky P."/>
            <person name="Riley A."/>
            <person name="Strowmatt C."/>
            <person name="Wagner-McPherson C."/>
            <person name="Wollam A."/>
            <person name="Yoakum M."/>
            <person name="Bell M."/>
            <person name="Dedhia N."/>
            <person name="Parnell L."/>
            <person name="Shah R."/>
            <person name="Rodriguez M."/>
            <person name="Hoon See L."/>
            <person name="Vil D."/>
            <person name="Baker J."/>
            <person name="Kirchoff K."/>
            <person name="Toth K."/>
            <person name="King L."/>
            <person name="Bahret A."/>
            <person name="Miller B."/>
            <person name="Marra M.A."/>
            <person name="Martienssen R."/>
            <person name="McCombie W.R."/>
            <person name="Wilson R.K."/>
            <person name="Murphy G."/>
            <person name="Bancroft I."/>
            <person name="Volckaert G."/>
            <person name="Wambutt R."/>
            <person name="Duesterhoeft A."/>
            <person name="Stiekema W."/>
            <person name="Pohl T."/>
            <person name="Entian K.-D."/>
            <person name="Terryn N."/>
            <person name="Hartley N."/>
            <person name="Bent E."/>
            <person name="Johnson S."/>
            <person name="Langham S.-A."/>
            <person name="McCullagh B."/>
            <person name="Robben J."/>
            <person name="Grymonprez B."/>
            <person name="Zimmermann W."/>
            <person name="Ramsperger U."/>
            <person name="Wedler H."/>
            <person name="Balke K."/>
            <person name="Wedler E."/>
            <person name="Peters S."/>
            <person name="van Staveren M."/>
            <person name="Dirkse W."/>
            <person name="Mooijman P."/>
            <person name="Klein Lankhorst R."/>
            <person name="Weitzenegger T."/>
            <person name="Bothe G."/>
            <person name="Rose M."/>
            <person name="Hauf J."/>
            <person name="Berneiser S."/>
            <person name="Hempel S."/>
            <person name="Feldpausch M."/>
            <person name="Lamberth S."/>
            <person name="Villarroel R."/>
            <person name="Gielen J."/>
            <person name="Ardiles W."/>
            <person name="Bents O."/>
            <person name="Lemcke K."/>
            <person name="Kolesov G."/>
            <person name="Mayer K.F.X."/>
            <person name="Rudd S."/>
            <person name="Schoof H."/>
            <person name="Schueller C."/>
            <person name="Zaccaria P."/>
            <person name="Mewes H.-W."/>
            <person name="Bevan M."/>
            <person name="Fransz P.F."/>
        </authorList>
    </citation>
    <scope>NUCLEOTIDE SEQUENCE [LARGE SCALE GENOMIC DNA]</scope>
    <source>
        <strain>cv. Columbia</strain>
    </source>
</reference>
<reference key="3">
    <citation type="journal article" date="2017" name="Plant J.">
        <title>Araport11: a complete reannotation of the Arabidopsis thaliana reference genome.</title>
        <authorList>
            <person name="Cheng C.Y."/>
            <person name="Krishnakumar V."/>
            <person name="Chan A.P."/>
            <person name="Thibaud-Nissen F."/>
            <person name="Schobel S."/>
            <person name="Town C.D."/>
        </authorList>
    </citation>
    <scope>GENOME REANNOTATION</scope>
    <source>
        <strain>cv. Columbia</strain>
    </source>
</reference>
<reference key="4">
    <citation type="journal article" date="2003" name="Science">
        <title>Empirical analysis of transcriptional activity in the Arabidopsis genome.</title>
        <authorList>
            <person name="Yamada K."/>
            <person name="Lim J."/>
            <person name="Dale J.M."/>
            <person name="Chen H."/>
            <person name="Shinn P."/>
            <person name="Palm C.J."/>
            <person name="Southwick A.M."/>
            <person name="Wu H.C."/>
            <person name="Kim C.J."/>
            <person name="Nguyen M."/>
            <person name="Pham P.K."/>
            <person name="Cheuk R.F."/>
            <person name="Karlin-Newmann G."/>
            <person name="Liu S.X."/>
            <person name="Lam B."/>
            <person name="Sakano H."/>
            <person name="Wu T."/>
            <person name="Yu G."/>
            <person name="Miranda M."/>
            <person name="Quach H.L."/>
            <person name="Tripp M."/>
            <person name="Chang C.H."/>
            <person name="Lee J.M."/>
            <person name="Toriumi M.J."/>
            <person name="Chan M.M."/>
            <person name="Tang C.C."/>
            <person name="Onodera C.S."/>
            <person name="Deng J.M."/>
            <person name="Akiyama K."/>
            <person name="Ansari Y."/>
            <person name="Arakawa T."/>
            <person name="Banh J."/>
            <person name="Banno F."/>
            <person name="Bowser L."/>
            <person name="Brooks S.Y."/>
            <person name="Carninci P."/>
            <person name="Chao Q."/>
            <person name="Choy N."/>
            <person name="Enju A."/>
            <person name="Goldsmith A.D."/>
            <person name="Gurjal M."/>
            <person name="Hansen N.F."/>
            <person name="Hayashizaki Y."/>
            <person name="Johnson-Hopson C."/>
            <person name="Hsuan V.W."/>
            <person name="Iida K."/>
            <person name="Karnes M."/>
            <person name="Khan S."/>
            <person name="Koesema E."/>
            <person name="Ishida J."/>
            <person name="Jiang P.X."/>
            <person name="Jones T."/>
            <person name="Kawai J."/>
            <person name="Kamiya A."/>
            <person name="Meyers C."/>
            <person name="Nakajima M."/>
            <person name="Narusaka M."/>
            <person name="Seki M."/>
            <person name="Sakurai T."/>
            <person name="Satou M."/>
            <person name="Tamse R."/>
            <person name="Vaysberg M."/>
            <person name="Wallender E.K."/>
            <person name="Wong C."/>
            <person name="Yamamura Y."/>
            <person name="Yuan S."/>
            <person name="Shinozaki K."/>
            <person name="Davis R.W."/>
            <person name="Theologis A."/>
            <person name="Ecker J.R."/>
        </authorList>
    </citation>
    <scope>NUCLEOTIDE SEQUENCE [LARGE SCALE MRNA]</scope>
    <source>
        <strain>cv. Columbia</strain>
    </source>
</reference>
<reference key="5">
    <citation type="submission" date="2002-03" db="EMBL/GenBank/DDBJ databases">
        <title>Full-length cDNA from Arabidopsis thaliana.</title>
        <authorList>
            <person name="Brover V.V."/>
            <person name="Troukhan M.E."/>
            <person name="Alexandrov N.A."/>
            <person name="Lu Y.-P."/>
            <person name="Flavell R.B."/>
            <person name="Feldmann K.A."/>
        </authorList>
    </citation>
    <scope>NUCLEOTIDE SEQUENCE [LARGE SCALE MRNA]</scope>
</reference>
<reference key="6">
    <citation type="journal article" date="2003" name="Plant Physiol.">
        <title>The fasciclin-like arabinogalactan proteins of Arabidopsis. A multigene family of putative cell adhesion molecules.</title>
        <authorList>
            <person name="Johnson K.L."/>
            <person name="Jones B.J."/>
            <person name="Bacic A."/>
            <person name="Schultz C.J."/>
        </authorList>
    </citation>
    <scope>GENE FAMILY ORGANIZATION</scope>
    <scope>NOMENCLATURE</scope>
</reference>
<reference key="7">
    <citation type="journal article" date="2005" name="Biosci. Biotechnol. Biochem.">
        <title>AtFLA11, a fasciclin-like arabinogalactan-protein, specifically localized in sclerenchyma cells.</title>
        <authorList>
            <person name="Ito S."/>
            <person name="Suzuki Y."/>
            <person name="Miyamoto K."/>
            <person name="Ueda J."/>
            <person name="Yamaguchi I."/>
        </authorList>
    </citation>
    <scope>TISSUE SPECIFICITY</scope>
</reference>
<comment type="function">
    <text>May be a cell surface adhesion protein.</text>
</comment>
<comment type="subcellular location">
    <subcellularLocation>
        <location evidence="5">Cell membrane</location>
        <topology evidence="5">Lipid-anchor</topology>
        <topology evidence="5">GPI-anchor</topology>
    </subcellularLocation>
</comment>
<comment type="tissue specificity">
    <text evidence="4">Expressed in the sclerenchyma cells of inflorescence stems and siliques.</text>
</comment>
<comment type="similarity">
    <text evidence="5">Belongs to the fasciclin-like AGP family.</text>
</comment>